<protein>
    <recommendedName>
        <fullName evidence="1">Signal recognition particle 54 kDa protein</fullName>
        <shortName evidence="1">SRP54</shortName>
        <ecNumber evidence="1">3.6.5.4</ecNumber>
    </recommendedName>
</protein>
<gene>
    <name evidence="1" type="primary">srp54</name>
    <name type="ordered locus">YN1551_1611</name>
</gene>
<keyword id="KW-0963">Cytoplasm</keyword>
<keyword id="KW-0342">GTP-binding</keyword>
<keyword id="KW-0378">Hydrolase</keyword>
<keyword id="KW-0547">Nucleotide-binding</keyword>
<keyword id="KW-0687">Ribonucleoprotein</keyword>
<keyword id="KW-0694">RNA-binding</keyword>
<keyword id="KW-0733">Signal recognition particle</keyword>
<dbReference type="EC" id="3.6.5.4" evidence="1"/>
<dbReference type="EMBL" id="CP001404">
    <property type="protein sequence ID" value="ACP48699.1"/>
    <property type="molecule type" value="Genomic_DNA"/>
</dbReference>
<dbReference type="RefSeq" id="WP_012717517.1">
    <property type="nucleotide sequence ID" value="NC_012623.1"/>
</dbReference>
<dbReference type="SMR" id="C3NHT9"/>
<dbReference type="GeneID" id="7809043"/>
<dbReference type="KEGG" id="sin:YN1551_1611"/>
<dbReference type="HOGENOM" id="CLU_009301_6_0_2"/>
<dbReference type="Proteomes" id="UP000006818">
    <property type="component" value="Chromosome"/>
</dbReference>
<dbReference type="GO" id="GO:0048500">
    <property type="term" value="C:signal recognition particle"/>
    <property type="evidence" value="ECO:0007669"/>
    <property type="project" value="UniProtKB-UniRule"/>
</dbReference>
<dbReference type="GO" id="GO:0008312">
    <property type="term" value="F:7S RNA binding"/>
    <property type="evidence" value="ECO:0007669"/>
    <property type="project" value="UniProtKB-UniRule"/>
</dbReference>
<dbReference type="GO" id="GO:0016887">
    <property type="term" value="F:ATP hydrolysis activity"/>
    <property type="evidence" value="ECO:0007669"/>
    <property type="project" value="InterPro"/>
</dbReference>
<dbReference type="GO" id="GO:0005525">
    <property type="term" value="F:GTP binding"/>
    <property type="evidence" value="ECO:0007669"/>
    <property type="project" value="UniProtKB-UniRule"/>
</dbReference>
<dbReference type="GO" id="GO:0003924">
    <property type="term" value="F:GTPase activity"/>
    <property type="evidence" value="ECO:0007669"/>
    <property type="project" value="UniProtKB-UniRule"/>
</dbReference>
<dbReference type="GO" id="GO:0006614">
    <property type="term" value="P:SRP-dependent cotranslational protein targeting to membrane"/>
    <property type="evidence" value="ECO:0007669"/>
    <property type="project" value="InterPro"/>
</dbReference>
<dbReference type="CDD" id="cd17875">
    <property type="entry name" value="SRP54_G"/>
    <property type="match status" value="1"/>
</dbReference>
<dbReference type="FunFam" id="3.40.50.300:FF:000022">
    <property type="entry name" value="Signal recognition particle 54 kDa subunit"/>
    <property type="match status" value="1"/>
</dbReference>
<dbReference type="Gene3D" id="3.40.50.300">
    <property type="entry name" value="P-loop containing nucleotide triphosphate hydrolases"/>
    <property type="match status" value="1"/>
</dbReference>
<dbReference type="Gene3D" id="1.20.120.140">
    <property type="entry name" value="Signal recognition particle SRP54, nucleotide-binding domain"/>
    <property type="match status" value="1"/>
</dbReference>
<dbReference type="Gene3D" id="1.10.260.30">
    <property type="entry name" value="Signal recognition particle, SRP54 subunit, M-domain"/>
    <property type="match status" value="1"/>
</dbReference>
<dbReference type="HAMAP" id="MF_00306">
    <property type="entry name" value="SRP54"/>
    <property type="match status" value="1"/>
</dbReference>
<dbReference type="InterPro" id="IPR003593">
    <property type="entry name" value="AAA+_ATPase"/>
</dbReference>
<dbReference type="InterPro" id="IPR027417">
    <property type="entry name" value="P-loop_NTPase"/>
</dbReference>
<dbReference type="InterPro" id="IPR036891">
    <property type="entry name" value="Signal_recog_part_SRP54_M_sf"/>
</dbReference>
<dbReference type="InterPro" id="IPR013822">
    <property type="entry name" value="Signal_recog_particl_SRP54_hlx"/>
</dbReference>
<dbReference type="InterPro" id="IPR004125">
    <property type="entry name" value="Signal_recog_particle_SRP54_M"/>
</dbReference>
<dbReference type="InterPro" id="IPR036225">
    <property type="entry name" value="SRP/SRP_N"/>
</dbReference>
<dbReference type="InterPro" id="IPR022941">
    <property type="entry name" value="SRP54"/>
</dbReference>
<dbReference type="InterPro" id="IPR000897">
    <property type="entry name" value="SRP54_GTPase_dom"/>
</dbReference>
<dbReference type="InterPro" id="IPR042101">
    <property type="entry name" value="SRP54_N_sf"/>
</dbReference>
<dbReference type="PANTHER" id="PTHR11564">
    <property type="entry name" value="SIGNAL RECOGNITION PARTICLE 54K PROTEIN SRP54"/>
    <property type="match status" value="1"/>
</dbReference>
<dbReference type="PANTHER" id="PTHR11564:SF5">
    <property type="entry name" value="SIGNAL RECOGNITION PARTICLE SUBUNIT SRP54"/>
    <property type="match status" value="1"/>
</dbReference>
<dbReference type="Pfam" id="PF00448">
    <property type="entry name" value="SRP54"/>
    <property type="match status" value="1"/>
</dbReference>
<dbReference type="Pfam" id="PF02881">
    <property type="entry name" value="SRP54_N"/>
    <property type="match status" value="1"/>
</dbReference>
<dbReference type="Pfam" id="PF02978">
    <property type="entry name" value="SRP_SPB"/>
    <property type="match status" value="1"/>
</dbReference>
<dbReference type="SMART" id="SM00382">
    <property type="entry name" value="AAA"/>
    <property type="match status" value="1"/>
</dbReference>
<dbReference type="SMART" id="SM00962">
    <property type="entry name" value="SRP54"/>
    <property type="match status" value="1"/>
</dbReference>
<dbReference type="SMART" id="SM00963">
    <property type="entry name" value="SRP54_N"/>
    <property type="match status" value="1"/>
</dbReference>
<dbReference type="SUPFAM" id="SSF47364">
    <property type="entry name" value="Domain of the SRP/SRP receptor G-proteins"/>
    <property type="match status" value="1"/>
</dbReference>
<dbReference type="SUPFAM" id="SSF52540">
    <property type="entry name" value="P-loop containing nucleoside triphosphate hydrolases"/>
    <property type="match status" value="1"/>
</dbReference>
<dbReference type="SUPFAM" id="SSF47446">
    <property type="entry name" value="Signal peptide-binding domain"/>
    <property type="match status" value="1"/>
</dbReference>
<name>SRP54_SACI1</name>
<reference key="1">
    <citation type="journal article" date="2009" name="Proc. Natl. Acad. Sci. U.S.A.">
        <title>Biogeography of the Sulfolobus islandicus pan-genome.</title>
        <authorList>
            <person name="Reno M.L."/>
            <person name="Held N.L."/>
            <person name="Fields C.J."/>
            <person name="Burke P.V."/>
            <person name="Whitaker R.J."/>
        </authorList>
    </citation>
    <scope>NUCLEOTIDE SEQUENCE [LARGE SCALE GENOMIC DNA]</scope>
    <source>
        <strain>Y.N.15.51 / Yellowstone #2</strain>
    </source>
</reference>
<sequence length="447" mass="50023">MLENIRDAVRKFLTRSTPYEKAVDEFIKELQKSLISSDVNVKLVFSLTAKIKERLNKEKPPSVLERKEWFISIVYDELSKLFGGDKEPNVNPTKLPFIIMLVGVQGSGKTTTAGKLAYFYKRRGYKVGLVAADVYRPAAYDQLLQLGNQIGVPVYGEPNNQNAIEIAKKGVDTFVKNKMDIIIVDTAGRHGYGEETKLLEEMKEIYEALKPDDVILVIDASIGQKAYDLASRFHQASPIGSIIITKMDGTAKGGGALSAVAATGATIKFIGTGEKIDELEIFNAKRYVSRILGMGDIESILEKVKGLEEYEKIQKKMEDVMEGKGKLTLRDVYAQIMALRKMGPLSKVLQHIPGLGVMLPTPSEDQLKLGEEKIRRWLAALNSMTYKELENPSIIDKSRMRRIAEGSGLEVEDVRELLEWYNNMNKLLKMVKRRRGSIDKLFGGKIG</sequence>
<accession>C3NHT9</accession>
<proteinExistence type="inferred from homology"/>
<evidence type="ECO:0000255" key="1">
    <source>
        <dbReference type="HAMAP-Rule" id="MF_00306"/>
    </source>
</evidence>
<organism>
    <name type="scientific">Saccharolobus islandicus (strain Y.N.15.51 / Yellowstone #2)</name>
    <name type="common">Sulfolobus islandicus</name>
    <dbReference type="NCBI Taxonomy" id="419942"/>
    <lineage>
        <taxon>Archaea</taxon>
        <taxon>Thermoproteota</taxon>
        <taxon>Thermoprotei</taxon>
        <taxon>Sulfolobales</taxon>
        <taxon>Sulfolobaceae</taxon>
        <taxon>Saccharolobus</taxon>
    </lineage>
</organism>
<comment type="function">
    <text evidence="1">Involved in targeting and insertion of nascent membrane proteins into the cytoplasmic membrane. Binds to the hydrophobic signal sequence of the ribosome-nascent chain (RNC) as it emerges from the ribosomes. The SRP-RNC complex is then targeted to the cytoplasmic membrane where it interacts with the SRP receptor FtsY.</text>
</comment>
<comment type="catalytic activity">
    <reaction evidence="1">
        <text>GTP + H2O = GDP + phosphate + H(+)</text>
        <dbReference type="Rhea" id="RHEA:19669"/>
        <dbReference type="ChEBI" id="CHEBI:15377"/>
        <dbReference type="ChEBI" id="CHEBI:15378"/>
        <dbReference type="ChEBI" id="CHEBI:37565"/>
        <dbReference type="ChEBI" id="CHEBI:43474"/>
        <dbReference type="ChEBI" id="CHEBI:58189"/>
        <dbReference type="EC" id="3.6.5.4"/>
    </reaction>
</comment>
<comment type="subunit">
    <text evidence="1">Part of the signal recognition particle protein translocation system, which is composed of SRP and FtsY. Archaeal SRP consists of a 7S RNA molecule of 300 nucleotides and two protein subunits: SRP54 and SRP19.</text>
</comment>
<comment type="subcellular location">
    <subcellularLocation>
        <location evidence="1">Cytoplasm</location>
    </subcellularLocation>
    <text evidence="1">The SRP-RNC complex is targeted to the cytoplasmic membrane.</text>
</comment>
<comment type="domain">
    <text evidence="1">Composed of three domains: the N-terminal N domain, which is responsible for interactions with the ribosome, the central G domain, which binds GTP, and the C-terminal M domain, which binds the RNA and the signal sequence of the RNC.</text>
</comment>
<comment type="similarity">
    <text evidence="1">Belongs to the GTP-binding SRP family. SRP54 subfamily.</text>
</comment>
<feature type="chain" id="PRO_1000205015" description="Signal recognition particle 54 kDa protein">
    <location>
        <begin position="1"/>
        <end position="447"/>
    </location>
</feature>
<feature type="binding site" evidence="1">
    <location>
        <begin position="103"/>
        <end position="110"/>
    </location>
    <ligand>
        <name>GTP</name>
        <dbReference type="ChEBI" id="CHEBI:37565"/>
    </ligand>
</feature>
<feature type="binding site" evidence="1">
    <location>
        <begin position="185"/>
        <end position="189"/>
    </location>
    <ligand>
        <name>GTP</name>
        <dbReference type="ChEBI" id="CHEBI:37565"/>
    </ligand>
</feature>
<feature type="binding site" evidence="1">
    <location>
        <begin position="245"/>
        <end position="248"/>
    </location>
    <ligand>
        <name>GTP</name>
        <dbReference type="ChEBI" id="CHEBI:37565"/>
    </ligand>
</feature>